<accession>O68952</accession>
<dbReference type="EC" id="1.18.6.1"/>
<dbReference type="EMBL" id="AF058782">
    <property type="protein sequence ID" value="AAC14339.1"/>
    <property type="molecule type" value="Genomic_DNA"/>
</dbReference>
<dbReference type="SMR" id="O68952"/>
<dbReference type="GO" id="GO:0005524">
    <property type="term" value="F:ATP binding"/>
    <property type="evidence" value="ECO:0007669"/>
    <property type="project" value="UniProtKB-KW"/>
</dbReference>
<dbReference type="GO" id="GO:0051536">
    <property type="term" value="F:iron-sulfur cluster binding"/>
    <property type="evidence" value="ECO:0007669"/>
    <property type="project" value="UniProtKB-KW"/>
</dbReference>
<dbReference type="GO" id="GO:0046872">
    <property type="term" value="F:metal ion binding"/>
    <property type="evidence" value="ECO:0007669"/>
    <property type="project" value="UniProtKB-KW"/>
</dbReference>
<dbReference type="GO" id="GO:0016163">
    <property type="term" value="F:nitrogenase activity"/>
    <property type="evidence" value="ECO:0007669"/>
    <property type="project" value="UniProtKB-EC"/>
</dbReference>
<dbReference type="GO" id="GO:0009399">
    <property type="term" value="P:nitrogen fixation"/>
    <property type="evidence" value="ECO:0007669"/>
    <property type="project" value="UniProtKB-KW"/>
</dbReference>
<dbReference type="Gene3D" id="3.40.50.1980">
    <property type="entry name" value="Nitrogenase molybdenum iron protein domain"/>
    <property type="match status" value="2"/>
</dbReference>
<dbReference type="Gene3D" id="1.20.89.10">
    <property type="entry name" value="Nitrogenase Molybdenum-iron Protein, subunit B, domain 4"/>
    <property type="match status" value="1"/>
</dbReference>
<dbReference type="InterPro" id="IPR050152">
    <property type="entry name" value="ChlB/BchB/BchZ"/>
</dbReference>
<dbReference type="InterPro" id="IPR000510">
    <property type="entry name" value="Nase/OxRdtase_comp1"/>
</dbReference>
<dbReference type="InterPro" id="IPR000318">
    <property type="entry name" value="Nase_comp1_CS"/>
</dbReference>
<dbReference type="PANTHER" id="PTHR33712">
    <property type="entry name" value="LIGHT-INDEPENDENT PROTOCHLOROPHYLLIDE REDUCTASE SUBUNIT B"/>
    <property type="match status" value="1"/>
</dbReference>
<dbReference type="PANTHER" id="PTHR33712:SF7">
    <property type="entry name" value="LIGHT-INDEPENDENT PROTOCHLOROPHYLLIDE REDUCTASE SUBUNIT B"/>
    <property type="match status" value="1"/>
</dbReference>
<dbReference type="Pfam" id="PF00148">
    <property type="entry name" value="Oxidored_nitro"/>
    <property type="match status" value="1"/>
</dbReference>
<dbReference type="SUPFAM" id="SSF53807">
    <property type="entry name" value="Helical backbone' metal receptor"/>
    <property type="match status" value="1"/>
</dbReference>
<dbReference type="PROSITE" id="PS00699">
    <property type="entry name" value="NITROGENASE_1_1"/>
    <property type="match status" value="1"/>
</dbReference>
<dbReference type="PROSITE" id="PS00090">
    <property type="entry name" value="NITROGENASE_1_2"/>
    <property type="match status" value="1"/>
</dbReference>
<organism>
    <name type="scientific">Azotobacter salinestris</name>
    <dbReference type="NCBI Taxonomy" id="69964"/>
    <lineage>
        <taxon>Bacteria</taxon>
        <taxon>Pseudomonadati</taxon>
        <taxon>Pseudomonadota</taxon>
        <taxon>Gammaproteobacteria</taxon>
        <taxon>Pseudomonadales</taxon>
        <taxon>Pseudomonadaceae</taxon>
        <taxon>Azotobacter</taxon>
    </lineage>
</organism>
<evidence type="ECO:0000250" key="1"/>
<evidence type="ECO:0000305" key="2"/>
<comment type="function">
    <text>This vanadium-iron protein is part of the nitrogenase complex that catalyzes the key enzymatic reactions in nitrogen fixation.</text>
</comment>
<comment type="catalytic activity">
    <reaction>
        <text>N2 + 8 reduced [2Fe-2S]-[ferredoxin] + 16 ATP + 16 H2O = H2 + 8 oxidized [2Fe-2S]-[ferredoxin] + 2 NH4(+) + 16 ADP + 16 phosphate + 6 H(+)</text>
        <dbReference type="Rhea" id="RHEA:21448"/>
        <dbReference type="Rhea" id="RHEA-COMP:10000"/>
        <dbReference type="Rhea" id="RHEA-COMP:10001"/>
        <dbReference type="ChEBI" id="CHEBI:15377"/>
        <dbReference type="ChEBI" id="CHEBI:15378"/>
        <dbReference type="ChEBI" id="CHEBI:17997"/>
        <dbReference type="ChEBI" id="CHEBI:18276"/>
        <dbReference type="ChEBI" id="CHEBI:28938"/>
        <dbReference type="ChEBI" id="CHEBI:30616"/>
        <dbReference type="ChEBI" id="CHEBI:33737"/>
        <dbReference type="ChEBI" id="CHEBI:33738"/>
        <dbReference type="ChEBI" id="CHEBI:43474"/>
        <dbReference type="ChEBI" id="CHEBI:456216"/>
        <dbReference type="EC" id="1.18.6.1"/>
    </reaction>
</comment>
<comment type="cofactor">
    <cofactor evidence="1">
        <name>[8Fe-7S] cluster</name>
        <dbReference type="ChEBI" id="CHEBI:21143"/>
    </cofactor>
    <text evidence="1">Binds 1 [8Fe-7S] cluster per heterodimer.</text>
</comment>
<comment type="subunit">
    <text evidence="1">Hexamer of two alpha, two beta, and two delta chains.</text>
</comment>
<comment type="similarity">
    <text evidence="2">Belongs to the NifD/NifK/NifE/NifN family.</text>
</comment>
<protein>
    <recommendedName>
        <fullName>Nitrogenase vanadium-iron protein beta chain</fullName>
        <ecNumber>1.18.6.1</ecNumber>
    </recommendedName>
    <alternativeName>
        <fullName>Dinitrogenase 2 subunit beta</fullName>
    </alternativeName>
    <alternativeName>
        <fullName>Nitrogenase component I</fullName>
    </alternativeName>
</protein>
<reference key="1">
    <citation type="journal article" date="1999" name="Can. J. Microbiol.">
        <title>Identification of genes unique to Mo-independent nitrogenase systems in diverse diazotrophs.</title>
        <authorList>
            <person name="Loveless T.M."/>
            <person name="Bishop P.E."/>
        </authorList>
    </citation>
    <scope>NUCLEOTIDE SEQUENCE [GENOMIC DNA]</scope>
</reference>
<name>VNFK_AZOSA</name>
<proteinExistence type="inferred from homology"/>
<sequence length="348" mass="37951">MSNCELTVLKPAEVKLSPRDREGIINPMYDCQPAGAQYAGIGIKDCIPLVHGGQGCTMFVRLLFAQHFKENFDVASTSLHEESAVFGGAKRVEEGVLVLARRYPNLRVIPIITTCSTEVIGDDIEGTINVCNRALATEFPERKIHLAPVHTPSLKGSHVTGYAECVKSVFKTISDAHGKGQPSGKLNVFPGWVNPGDVVLLKRYFKEMGVDANIYMDTEDFDSPMLPNKSIETHGRTTVEDIADSANALGTLALARYEGATTGDLLQKTFQVPNHLVNTPYGIKNTDDMLRKIAEVTGKEIPESLVKERGIALDALADLAHMFFANKKVAIFGHPDLVLGLAQFCLEV</sequence>
<gene>
    <name type="primary">vnfK</name>
</gene>
<keyword id="KW-0067">ATP-binding</keyword>
<keyword id="KW-0408">Iron</keyword>
<keyword id="KW-0411">Iron-sulfur</keyword>
<keyword id="KW-0479">Metal-binding</keyword>
<keyword id="KW-0535">Nitrogen fixation</keyword>
<keyword id="KW-0547">Nucleotide-binding</keyword>
<keyword id="KW-0560">Oxidoreductase</keyword>
<feature type="chain" id="PRO_0000153090" description="Nitrogenase vanadium-iron protein beta chain">
    <location>
        <begin position="1"/>
        <end position="348" status="greater than"/>
    </location>
</feature>
<feature type="binding site" evidence="1">
    <location>
        <position position="31"/>
    </location>
    <ligand>
        <name>[8Fe-7S] cluster</name>
        <dbReference type="ChEBI" id="CHEBI:21143"/>
        <note>ligand shared with alpha chain</note>
    </ligand>
</feature>
<feature type="binding site" evidence="1">
    <location>
        <position position="56"/>
    </location>
    <ligand>
        <name>[8Fe-7S] cluster</name>
        <dbReference type="ChEBI" id="CHEBI:21143"/>
        <note>ligand shared with alpha chain</note>
    </ligand>
</feature>
<feature type="binding site" evidence="1">
    <location>
        <position position="115"/>
    </location>
    <ligand>
        <name>[8Fe-7S] cluster</name>
        <dbReference type="ChEBI" id="CHEBI:21143"/>
        <note>ligand shared with alpha chain</note>
    </ligand>
</feature>
<feature type="binding site" evidence="1">
    <location>
        <position position="153"/>
    </location>
    <ligand>
        <name>[8Fe-7S] cluster</name>
        <dbReference type="ChEBI" id="CHEBI:21143"/>
        <note>ligand shared with alpha chain</note>
    </ligand>
</feature>
<feature type="non-terminal residue">
    <location>
        <position position="348"/>
    </location>
</feature>